<feature type="chain" id="PRO_0000131447" description="Large ribosomal subunit protein uL18z">
    <location>
        <begin position="1"/>
        <end position="304"/>
    </location>
</feature>
<feature type="region of interest" description="Disordered" evidence="2">
    <location>
        <begin position="285"/>
        <end position="304"/>
    </location>
</feature>
<feature type="compositionally biased region" description="Acidic residues" evidence="2">
    <location>
        <begin position="294"/>
        <end position="304"/>
    </location>
</feature>
<sequence length="304" mass="34729">MGGFVKTQKTNAYHKRFQVKFKRRRQGKTDYRARIRLTNQDKNKYNTPKYRFVVRFTNKDITAQIVYATIAGDIVMAAAYSHELPRYGLEVGLTNYAAAYCTGLLLARRVLKLRGLDQEYEGNIEATGEDYYVEPADERRPFRALLDVGLIRTTTGNRVFGALKGALDGGLDIPHSDKRFAGFKKDEKQLDSDIHRKYIYGGHVADYMRSMAEEEPEKFQAHFSEYLKKGIDADGMEALYKKVHAAIRADPTMAKSTKKEPATHKRYNLKKLTYEQRKASLVERLNALNSSAGADDDDEEEDDE</sequence>
<evidence type="ECO:0000250" key="1">
    <source>
        <dbReference type="UniProtKB" id="P26321"/>
    </source>
</evidence>
<evidence type="ECO:0000256" key="2">
    <source>
        <dbReference type="SAM" id="MobiDB-lite"/>
    </source>
</evidence>
<evidence type="ECO:0000305" key="3"/>
<proteinExistence type="evidence at transcript level"/>
<comment type="function">
    <text evidence="1">Component of the ribosome, a large ribonucleoprotein complex responsible for the synthesis of proteins in the cell. The small ribosomal subunit (SSU) binds messenger RNAs (mRNAs) and translates the encoded message by selecting cognate aminoacyl-transfer RNA (tRNA) molecules. The large subunit (LSU) contains the ribosomal catalytic site termed the peptidyl transferase center (PTC), which catalyzes the formation of peptide bonds, thereby polymerizing the amino acids delivered by tRNAs into a polypeptide chain. The nascent polypeptides leave the ribosome through a tunnel in the LSU and interact with protein factors that function in enzymatic processing, targeting, and the membrane insertion of nascent chains at the exit of the ribosomal tunnel.</text>
</comment>
<comment type="subunit">
    <text evidence="1">Component of the large ribosomal subunit (LSU).</text>
</comment>
<comment type="subcellular location">
    <subcellularLocation>
        <location evidence="1">Cytoplasm</location>
    </subcellularLocation>
    <subcellularLocation>
        <location evidence="1">Nucleus</location>
    </subcellularLocation>
</comment>
<comment type="similarity">
    <text evidence="3">Belongs to the universal ribosomal protein uL18 family.</text>
</comment>
<comment type="sequence caution" evidence="3">
    <conflict type="erroneous gene model prediction">
        <sequence resource="EMBL-CDS" id="BAC06273"/>
    </conflict>
</comment>
<reference key="1">
    <citation type="journal article" date="2002" name="Nature">
        <title>The genome sequence and structure of rice chromosome 1.</title>
        <authorList>
            <person name="Sasaki T."/>
            <person name="Matsumoto T."/>
            <person name="Yamamoto K."/>
            <person name="Sakata K."/>
            <person name="Baba T."/>
            <person name="Katayose Y."/>
            <person name="Wu J."/>
            <person name="Niimura Y."/>
            <person name="Cheng Z."/>
            <person name="Nagamura Y."/>
            <person name="Antonio B.A."/>
            <person name="Kanamori H."/>
            <person name="Hosokawa S."/>
            <person name="Masukawa M."/>
            <person name="Arikawa K."/>
            <person name="Chiden Y."/>
            <person name="Hayashi M."/>
            <person name="Okamoto M."/>
            <person name="Ando T."/>
            <person name="Aoki H."/>
            <person name="Arita K."/>
            <person name="Hamada M."/>
            <person name="Harada C."/>
            <person name="Hijishita S."/>
            <person name="Honda M."/>
            <person name="Ichikawa Y."/>
            <person name="Idonuma A."/>
            <person name="Iijima M."/>
            <person name="Ikeda M."/>
            <person name="Ikeno M."/>
            <person name="Ito S."/>
            <person name="Ito T."/>
            <person name="Ito Y."/>
            <person name="Ito Y."/>
            <person name="Iwabuchi A."/>
            <person name="Kamiya K."/>
            <person name="Karasawa W."/>
            <person name="Katagiri S."/>
            <person name="Kikuta A."/>
            <person name="Kobayashi N."/>
            <person name="Kono I."/>
            <person name="Machita K."/>
            <person name="Maehara T."/>
            <person name="Mizuno H."/>
            <person name="Mizubayashi T."/>
            <person name="Mukai Y."/>
            <person name="Nagasaki H."/>
            <person name="Nakashima M."/>
            <person name="Nakama Y."/>
            <person name="Nakamichi Y."/>
            <person name="Nakamura M."/>
            <person name="Namiki N."/>
            <person name="Negishi M."/>
            <person name="Ohta I."/>
            <person name="Ono N."/>
            <person name="Saji S."/>
            <person name="Sakai K."/>
            <person name="Shibata M."/>
            <person name="Shimokawa T."/>
            <person name="Shomura A."/>
            <person name="Song J."/>
            <person name="Takazaki Y."/>
            <person name="Terasawa K."/>
            <person name="Tsuji K."/>
            <person name="Waki K."/>
            <person name="Yamagata H."/>
            <person name="Yamane H."/>
            <person name="Yoshiki S."/>
            <person name="Yoshihara R."/>
            <person name="Yukawa K."/>
            <person name="Zhong H."/>
            <person name="Iwama H."/>
            <person name="Endo T."/>
            <person name="Ito H."/>
            <person name="Hahn J.H."/>
            <person name="Kim H.-I."/>
            <person name="Eun M.-Y."/>
            <person name="Yano M."/>
            <person name="Jiang J."/>
            <person name="Gojobori T."/>
        </authorList>
    </citation>
    <scope>NUCLEOTIDE SEQUENCE [LARGE SCALE GENOMIC DNA]</scope>
    <source>
        <strain>cv. Nipponbare</strain>
    </source>
</reference>
<reference key="2">
    <citation type="journal article" date="2005" name="Nature">
        <title>The map-based sequence of the rice genome.</title>
        <authorList>
            <consortium name="International rice genome sequencing project (IRGSP)"/>
        </authorList>
    </citation>
    <scope>NUCLEOTIDE SEQUENCE [LARGE SCALE GENOMIC DNA]</scope>
    <source>
        <strain>cv. Nipponbare</strain>
    </source>
</reference>
<reference key="3">
    <citation type="journal article" date="2008" name="Nucleic Acids Res.">
        <title>The rice annotation project database (RAP-DB): 2008 update.</title>
        <authorList>
            <consortium name="The rice annotation project (RAP)"/>
        </authorList>
    </citation>
    <scope>GENOME REANNOTATION</scope>
    <source>
        <strain>cv. Nipponbare</strain>
    </source>
</reference>
<reference key="4">
    <citation type="journal article" date="2013" name="Rice">
        <title>Improvement of the Oryza sativa Nipponbare reference genome using next generation sequence and optical map data.</title>
        <authorList>
            <person name="Kawahara Y."/>
            <person name="de la Bastide M."/>
            <person name="Hamilton J.P."/>
            <person name="Kanamori H."/>
            <person name="McCombie W.R."/>
            <person name="Ouyang S."/>
            <person name="Schwartz D.C."/>
            <person name="Tanaka T."/>
            <person name="Wu J."/>
            <person name="Zhou S."/>
            <person name="Childs K.L."/>
            <person name="Davidson R.M."/>
            <person name="Lin H."/>
            <person name="Quesada-Ocampo L."/>
            <person name="Vaillancourt B."/>
            <person name="Sakai H."/>
            <person name="Lee S.S."/>
            <person name="Kim J."/>
            <person name="Numa H."/>
            <person name="Itoh T."/>
            <person name="Buell C.R."/>
            <person name="Matsumoto T."/>
        </authorList>
    </citation>
    <scope>GENOME REANNOTATION</scope>
    <source>
        <strain>cv. Nipponbare</strain>
    </source>
</reference>
<reference key="5">
    <citation type="journal article" date="2003" name="Science">
        <title>Collection, mapping, and annotation of over 28,000 cDNA clones from japonica rice.</title>
        <authorList>
            <consortium name="The rice full-length cDNA consortium"/>
        </authorList>
    </citation>
    <scope>NUCLEOTIDE SEQUENCE [LARGE SCALE MRNA]</scope>
    <source>
        <strain>cv. Nipponbare</strain>
    </source>
</reference>
<organism>
    <name type="scientific">Oryza sativa subsp. japonica</name>
    <name type="common">Rice</name>
    <dbReference type="NCBI Taxonomy" id="39947"/>
    <lineage>
        <taxon>Eukaryota</taxon>
        <taxon>Viridiplantae</taxon>
        <taxon>Streptophyta</taxon>
        <taxon>Embryophyta</taxon>
        <taxon>Tracheophyta</taxon>
        <taxon>Spermatophyta</taxon>
        <taxon>Magnoliopsida</taxon>
        <taxon>Liliopsida</taxon>
        <taxon>Poales</taxon>
        <taxon>Poaceae</taxon>
        <taxon>BOP clade</taxon>
        <taxon>Oryzoideae</taxon>
        <taxon>Oryzeae</taxon>
        <taxon>Oryzinae</taxon>
        <taxon>Oryza</taxon>
        <taxon>Oryza sativa</taxon>
    </lineage>
</organism>
<keyword id="KW-0963">Cytoplasm</keyword>
<keyword id="KW-0539">Nucleus</keyword>
<keyword id="KW-1185">Reference proteome</keyword>
<keyword id="KW-0687">Ribonucleoprotein</keyword>
<keyword id="KW-0689">Ribosomal protein</keyword>
<keyword id="KW-0694">RNA-binding</keyword>
<keyword id="KW-0699">rRNA-binding</keyword>
<name>RL51_ORYSJ</name>
<gene>
    <name type="primary">RPL5A</name>
    <name type="synonym">RPL5</name>
    <name type="ordered locus">Os01g0896800</name>
    <name type="ordered locus">LOC_Os01g67134</name>
    <name type="ORF">P0674H09.12</name>
    <name type="ORF">P0696G06.30</name>
</gene>
<protein>
    <recommendedName>
        <fullName evidence="3">Large ribosomal subunit protein uL18z</fullName>
    </recommendedName>
    <alternativeName>
        <fullName>60S ribosomal protein L5-1</fullName>
    </alternativeName>
</protein>
<dbReference type="EMBL" id="AP003316">
    <property type="protein sequence ID" value="BAC06273.1"/>
    <property type="status" value="ALT_SEQ"/>
    <property type="molecule type" value="Genomic_DNA"/>
</dbReference>
<dbReference type="EMBL" id="AP003349">
    <property type="protein sequence ID" value="BAD82174.1"/>
    <property type="molecule type" value="Genomic_DNA"/>
</dbReference>
<dbReference type="EMBL" id="AP008207">
    <property type="protein sequence ID" value="BAF06997.1"/>
    <property type="molecule type" value="Genomic_DNA"/>
</dbReference>
<dbReference type="EMBL" id="AP014957">
    <property type="status" value="NOT_ANNOTATED_CDS"/>
    <property type="molecule type" value="Genomic_DNA"/>
</dbReference>
<dbReference type="EMBL" id="AK104693">
    <property type="status" value="NOT_ANNOTATED_CDS"/>
    <property type="molecule type" value="mRNA"/>
</dbReference>
<dbReference type="RefSeq" id="XP_015614994.1">
    <property type="nucleotide sequence ID" value="XM_015759508.1"/>
</dbReference>
<dbReference type="SMR" id="Q0JGY1"/>
<dbReference type="FunCoup" id="Q0JGY1">
    <property type="interactions" value="2770"/>
</dbReference>
<dbReference type="STRING" id="39947.Q0JGY1"/>
<dbReference type="PaxDb" id="39947-Q0JGY1"/>
<dbReference type="KEGG" id="dosa:Os01g0896800"/>
<dbReference type="eggNOG" id="KOG0875">
    <property type="taxonomic scope" value="Eukaryota"/>
</dbReference>
<dbReference type="HOGENOM" id="CLU_056222_1_0_1"/>
<dbReference type="InParanoid" id="Q0JGY1"/>
<dbReference type="OrthoDB" id="1618453at2759"/>
<dbReference type="Proteomes" id="UP000000763">
    <property type="component" value="Chromosome 1"/>
</dbReference>
<dbReference type="Proteomes" id="UP000059680">
    <property type="component" value="Chromosome 1"/>
</dbReference>
<dbReference type="GO" id="GO:0022625">
    <property type="term" value="C:cytosolic large ribosomal subunit"/>
    <property type="evidence" value="ECO:0000318"/>
    <property type="project" value="GO_Central"/>
</dbReference>
<dbReference type="GO" id="GO:0005634">
    <property type="term" value="C:nucleus"/>
    <property type="evidence" value="ECO:0007669"/>
    <property type="project" value="UniProtKB-SubCell"/>
</dbReference>
<dbReference type="GO" id="GO:0008097">
    <property type="term" value="F:5S rRNA binding"/>
    <property type="evidence" value="ECO:0000318"/>
    <property type="project" value="GO_Central"/>
</dbReference>
<dbReference type="GO" id="GO:0003735">
    <property type="term" value="F:structural constituent of ribosome"/>
    <property type="evidence" value="ECO:0000318"/>
    <property type="project" value="GO_Central"/>
</dbReference>
<dbReference type="GO" id="GO:0000027">
    <property type="term" value="P:ribosomal large subunit assembly"/>
    <property type="evidence" value="ECO:0000318"/>
    <property type="project" value="GO_Central"/>
</dbReference>
<dbReference type="GO" id="GO:0006412">
    <property type="term" value="P:translation"/>
    <property type="evidence" value="ECO:0007669"/>
    <property type="project" value="InterPro"/>
</dbReference>
<dbReference type="CDD" id="cd00432">
    <property type="entry name" value="Ribosomal_L18_L5e"/>
    <property type="match status" value="1"/>
</dbReference>
<dbReference type="FunFam" id="3.30.420.100:FF:000002">
    <property type="entry name" value="60S ribosomal protein L5"/>
    <property type="match status" value="1"/>
</dbReference>
<dbReference type="Gene3D" id="3.30.420.100">
    <property type="match status" value="1"/>
</dbReference>
<dbReference type="HAMAP" id="MF_01337_A">
    <property type="entry name" value="Ribosomal_uL18_A"/>
    <property type="match status" value="1"/>
</dbReference>
<dbReference type="InterPro" id="IPR005485">
    <property type="entry name" value="Rbsml_uL18_euk"/>
</dbReference>
<dbReference type="InterPro" id="IPR025607">
    <property type="entry name" value="Ribosomal_uL18_C_euk"/>
</dbReference>
<dbReference type="PANTHER" id="PTHR23410:SF12">
    <property type="entry name" value="LARGE RIBOSOMAL SUBUNIT PROTEIN UL18"/>
    <property type="match status" value="1"/>
</dbReference>
<dbReference type="PANTHER" id="PTHR23410">
    <property type="entry name" value="RIBOSOMAL PROTEIN L5-RELATED"/>
    <property type="match status" value="1"/>
</dbReference>
<dbReference type="Pfam" id="PF14204">
    <property type="entry name" value="Ribosomal_L18_c"/>
    <property type="match status" value="1"/>
</dbReference>
<dbReference type="Pfam" id="PF17144">
    <property type="entry name" value="Ribosomal_L5e"/>
    <property type="match status" value="1"/>
</dbReference>
<dbReference type="PRINTS" id="PR00058">
    <property type="entry name" value="RIBOSOMALL5"/>
</dbReference>
<dbReference type="SUPFAM" id="SSF53137">
    <property type="entry name" value="Translational machinery components"/>
    <property type="match status" value="1"/>
</dbReference>
<accession>Q0JGY1</accession>
<accession>P49625</accession>
<accession>Q5N8N2</accession>
<accession>Q8L3Y8</accession>